<keyword id="KW-0406">Ion transport</keyword>
<keyword id="KW-0520">NAD</keyword>
<keyword id="KW-0915">Sodium</keyword>
<keyword id="KW-0739">Sodium transport</keyword>
<keyword id="KW-1278">Translocase</keyword>
<keyword id="KW-0813">Transport</keyword>
<keyword id="KW-0830">Ubiquinone</keyword>
<dbReference type="EC" id="7.2.1.1" evidence="1"/>
<dbReference type="EMBL" id="AE016827">
    <property type="protein sequence ID" value="AAU36916.1"/>
    <property type="molecule type" value="Genomic_DNA"/>
</dbReference>
<dbReference type="RefSeq" id="WP_011199491.1">
    <property type="nucleotide sequence ID" value="NC_006300.1"/>
</dbReference>
<dbReference type="SMR" id="Q65VU4"/>
<dbReference type="STRING" id="221988.MS0309"/>
<dbReference type="KEGG" id="msu:MS0309"/>
<dbReference type="eggNOG" id="COG1726">
    <property type="taxonomic scope" value="Bacteria"/>
</dbReference>
<dbReference type="HOGENOM" id="CLU_046656_0_0_6"/>
<dbReference type="OrthoDB" id="9774536at2"/>
<dbReference type="Proteomes" id="UP000000607">
    <property type="component" value="Chromosome"/>
</dbReference>
<dbReference type="GO" id="GO:0016655">
    <property type="term" value="F:oxidoreductase activity, acting on NAD(P)H, quinone or similar compound as acceptor"/>
    <property type="evidence" value="ECO:0007669"/>
    <property type="project" value="UniProtKB-UniRule"/>
</dbReference>
<dbReference type="GO" id="GO:0006814">
    <property type="term" value="P:sodium ion transport"/>
    <property type="evidence" value="ECO:0007669"/>
    <property type="project" value="UniProtKB-UniRule"/>
</dbReference>
<dbReference type="Gene3D" id="2.40.50.100">
    <property type="match status" value="1"/>
</dbReference>
<dbReference type="HAMAP" id="MF_00425">
    <property type="entry name" value="NqrA"/>
    <property type="match status" value="1"/>
</dbReference>
<dbReference type="InterPro" id="IPR008703">
    <property type="entry name" value="NqrA"/>
</dbReference>
<dbReference type="InterPro" id="IPR056148">
    <property type="entry name" value="NQRA_2nd"/>
</dbReference>
<dbReference type="InterPro" id="IPR022615">
    <property type="entry name" value="NqrA_C_domain"/>
</dbReference>
<dbReference type="InterPro" id="IPR056147">
    <property type="entry name" value="NQRA_N"/>
</dbReference>
<dbReference type="NCBIfam" id="TIGR01936">
    <property type="entry name" value="nqrA"/>
    <property type="match status" value="1"/>
</dbReference>
<dbReference type="NCBIfam" id="NF003759">
    <property type="entry name" value="PRK05352.1-2"/>
    <property type="match status" value="1"/>
</dbReference>
<dbReference type="PANTHER" id="PTHR37839">
    <property type="entry name" value="NA(+)-TRANSLOCATING NADH-QUINONE REDUCTASE SUBUNIT A"/>
    <property type="match status" value="1"/>
</dbReference>
<dbReference type="PANTHER" id="PTHR37839:SF1">
    <property type="entry name" value="NA(+)-TRANSLOCATING NADH-QUINONE REDUCTASE SUBUNIT A"/>
    <property type="match status" value="1"/>
</dbReference>
<dbReference type="Pfam" id="PF24836">
    <property type="entry name" value="NQRA_2nd"/>
    <property type="match status" value="1"/>
</dbReference>
<dbReference type="Pfam" id="PF05896">
    <property type="entry name" value="NQRA_N"/>
    <property type="match status" value="1"/>
</dbReference>
<dbReference type="Pfam" id="PF11973">
    <property type="entry name" value="NQRA_SLBB"/>
    <property type="match status" value="1"/>
</dbReference>
<name>NQRA_MANSM</name>
<feature type="chain" id="PRO_1000060119" description="Na(+)-translocating NADH-quinone reductase subunit A">
    <location>
        <begin position="1"/>
        <end position="443"/>
    </location>
</feature>
<sequence length="443" mass="48004">MITIKKGLDLPINGKPEQVIRDGNAVTEVALLGEEYVGMRPSMKIHEGDTVKKGQILFEDKKNPGVVFTAPVSGTVTAINRGAKRVLQSVVIRVEGNDQETFAKYSPAELVSLSSEQVRQNLQTSGLWTALRTRPLSKIPAVDAVPSSIFVNAMDTNPLCADPAVIINEYQADFTNGLTVLTRLHNKVNLCKAAGSNIASVDNVDSHEFAGVHPAGLVGTHIHFIDPVGINKSVWHINYQDVIAIGKLFTTGELFTDRVVALAGPQVKNPRLVRTNIGANLSQLTANELADGNNRVISGSVLYGAKAEGAHDYLGRYALQVSVIAEDTEKEFFGWISPQANKYSITRTVLGHFGRKLFNFTTAENGGHRAMVPIGSYERVMPLDILPTLLLRDLEVGDTDSAQALGALELDEEDLALCTFVCPGKADYGSFLRQALDKIEKEG</sequence>
<gene>
    <name evidence="1" type="primary">nqrA</name>
    <name type="ordered locus">MS0309</name>
</gene>
<comment type="function">
    <text evidence="1">NQR complex catalyzes the reduction of ubiquinone-1 to ubiquinol by two successive reactions, coupled with the transport of Na(+) ions from the cytoplasm to the periplasm. NqrA to NqrE are probably involved in the second step, the conversion of ubisemiquinone to ubiquinol.</text>
</comment>
<comment type="catalytic activity">
    <reaction evidence="1">
        <text>a ubiquinone + n Na(+)(in) + NADH + H(+) = a ubiquinol + n Na(+)(out) + NAD(+)</text>
        <dbReference type="Rhea" id="RHEA:47748"/>
        <dbReference type="Rhea" id="RHEA-COMP:9565"/>
        <dbReference type="Rhea" id="RHEA-COMP:9566"/>
        <dbReference type="ChEBI" id="CHEBI:15378"/>
        <dbReference type="ChEBI" id="CHEBI:16389"/>
        <dbReference type="ChEBI" id="CHEBI:17976"/>
        <dbReference type="ChEBI" id="CHEBI:29101"/>
        <dbReference type="ChEBI" id="CHEBI:57540"/>
        <dbReference type="ChEBI" id="CHEBI:57945"/>
        <dbReference type="EC" id="7.2.1.1"/>
    </reaction>
</comment>
<comment type="subunit">
    <text evidence="1">Composed of six subunits; NqrA, NqrB, NqrC, NqrD, NqrE and NqrF.</text>
</comment>
<comment type="similarity">
    <text evidence="1">Belongs to the NqrA family.</text>
</comment>
<protein>
    <recommendedName>
        <fullName evidence="1">Na(+)-translocating NADH-quinone reductase subunit A</fullName>
        <shortName evidence="1">Na(+)-NQR subunit A</shortName>
        <shortName evidence="1">Na(+)-translocating NQR subunit A</shortName>
        <ecNumber evidence="1">7.2.1.1</ecNumber>
    </recommendedName>
    <alternativeName>
        <fullName evidence="1">NQR complex subunit A</fullName>
    </alternativeName>
    <alternativeName>
        <fullName evidence="1">NQR-1 subunit A</fullName>
    </alternativeName>
</protein>
<organism>
    <name type="scientific">Mannheimia succiniciproducens (strain KCTC 0769BP / MBEL55E)</name>
    <dbReference type="NCBI Taxonomy" id="221988"/>
    <lineage>
        <taxon>Bacteria</taxon>
        <taxon>Pseudomonadati</taxon>
        <taxon>Pseudomonadota</taxon>
        <taxon>Gammaproteobacteria</taxon>
        <taxon>Pasteurellales</taxon>
        <taxon>Pasteurellaceae</taxon>
        <taxon>Basfia</taxon>
    </lineage>
</organism>
<accession>Q65VU4</accession>
<reference key="1">
    <citation type="journal article" date="2004" name="Nat. Biotechnol.">
        <title>The genome sequence of the capnophilic rumen bacterium Mannheimia succiniciproducens.</title>
        <authorList>
            <person name="Hong S.H."/>
            <person name="Kim J.S."/>
            <person name="Lee S.Y."/>
            <person name="In Y.H."/>
            <person name="Choi S.S."/>
            <person name="Rih J.-K."/>
            <person name="Kim C.H."/>
            <person name="Jeong H."/>
            <person name="Hur C.G."/>
            <person name="Kim J.J."/>
        </authorList>
    </citation>
    <scope>NUCLEOTIDE SEQUENCE [LARGE SCALE GENOMIC DNA]</scope>
    <source>
        <strain>KCTC 0769BP / MBEL55E</strain>
    </source>
</reference>
<proteinExistence type="inferred from homology"/>
<evidence type="ECO:0000255" key="1">
    <source>
        <dbReference type="HAMAP-Rule" id="MF_00425"/>
    </source>
</evidence>